<name>JZT73_CHIGU</name>
<protein>
    <recommendedName>
        <fullName>U35-theraphotoxin-Cg1a</fullName>
        <shortName>U35-TRTX-Cg1a</shortName>
    </recommendedName>
    <alternativeName>
        <fullName>Jingzhaotoxin-73</fullName>
        <shortName>JZTX-73</shortName>
    </alternativeName>
</protein>
<dbReference type="EMBL" id="EU233925">
    <property type="protein sequence ID" value="ABY71744.1"/>
    <property type="molecule type" value="mRNA"/>
</dbReference>
<dbReference type="ArachnoServer" id="AS000872">
    <property type="toxin name" value="U35-theraphotoxin-Cg1a"/>
</dbReference>
<dbReference type="GO" id="GO:0005576">
    <property type="term" value="C:extracellular region"/>
    <property type="evidence" value="ECO:0007669"/>
    <property type="project" value="UniProtKB-SubCell"/>
</dbReference>
<dbReference type="GO" id="GO:0090729">
    <property type="term" value="F:toxin activity"/>
    <property type="evidence" value="ECO:0007669"/>
    <property type="project" value="UniProtKB-KW"/>
</dbReference>
<proteinExistence type="evidence at transcript level"/>
<comment type="function">
    <text>Probable secreted venom toxin.</text>
</comment>
<comment type="subcellular location">
    <subcellularLocation>
        <location evidence="1">Secreted</location>
    </subcellularLocation>
</comment>
<comment type="tissue specificity">
    <text>Expressed by the venom gland.</text>
</comment>
<evidence type="ECO:0000250" key="1"/>
<evidence type="ECO:0000255" key="2"/>
<feature type="signal peptide" evidence="2">
    <location>
        <begin position="1"/>
        <end position="18"/>
    </location>
</feature>
<feature type="propeptide" id="PRO_0000398556" evidence="1">
    <location>
        <begin position="19"/>
        <end position="56"/>
    </location>
</feature>
<feature type="peptide" id="PRO_0000398557" description="U35-theraphotoxin-Cg1a">
    <location>
        <begin position="57"/>
        <end position="134"/>
    </location>
</feature>
<accession>B1P1J4</accession>
<organism>
    <name type="scientific">Chilobrachys guangxiensis</name>
    <name type="common">Chinese earth tiger tarantula</name>
    <name type="synonym">Chilobrachys jingzhao</name>
    <dbReference type="NCBI Taxonomy" id="278060"/>
    <lineage>
        <taxon>Eukaryota</taxon>
        <taxon>Metazoa</taxon>
        <taxon>Ecdysozoa</taxon>
        <taxon>Arthropoda</taxon>
        <taxon>Chelicerata</taxon>
        <taxon>Arachnida</taxon>
        <taxon>Araneae</taxon>
        <taxon>Mygalomorphae</taxon>
        <taxon>Theraphosidae</taxon>
        <taxon>Chilobrachys</taxon>
    </lineage>
</organism>
<reference key="1">
    <citation type="journal article" date="2008" name="Cell. Mol. Life Sci.">
        <title>Molecular diversity and evolution of cystine knot toxins of the tarantula Chilobrachys jingzhao.</title>
        <authorList>
            <person name="Chen J."/>
            <person name="Deng M."/>
            <person name="He Q."/>
            <person name="Meng E."/>
            <person name="Jiang L."/>
            <person name="Liao Z."/>
            <person name="Rong M."/>
            <person name="Liang S."/>
        </authorList>
    </citation>
    <scope>NUCLEOTIDE SEQUENCE [LARGE SCALE MRNA]</scope>
    <source>
        <tissue>Venom gland</tissue>
    </source>
</reference>
<keyword id="KW-0964">Secreted</keyword>
<keyword id="KW-0732">Signal</keyword>
<keyword id="KW-0800">Toxin</keyword>
<sequence>MLVTLLETFSVVFQVANGDGNCVPRFQDDVEFCDNYILEAVTEASKMIAPRAREQKLCCGFNKFTHCVTTASKKCSEAADRVKRVLDTKMTSLGVHCPDTNKVCNGGVNTSVSANTVTVYLLFSLGYFFYMNKL</sequence>